<sequence>MFITKCSLHLKSFDLDVLKDSCALILKNKINLQNLKLTGPINLPTKIKKITVLRSPHIDKKSREQFEIRTYTKTIQIESLTKNTNDIINFMKQFENSFFFGLNIKVVFTYKKDVLL</sequence>
<comment type="subcellular location">
    <subcellularLocation>
        <location>Mitochondrion</location>
    </subcellularLocation>
</comment>
<comment type="similarity">
    <text evidence="1">Belongs to the universal ribosomal protein uS10 family.</text>
</comment>
<proteinExistence type="inferred from homology"/>
<name>RT10_RECAM</name>
<keyword id="KW-0496">Mitochondrion</keyword>
<keyword id="KW-0687">Ribonucleoprotein</keyword>
<keyword id="KW-0689">Ribosomal protein</keyword>
<organism>
    <name type="scientific">Reclinomonas americana</name>
    <dbReference type="NCBI Taxonomy" id="48483"/>
    <lineage>
        <taxon>Eukaryota</taxon>
        <taxon>Discoba</taxon>
        <taxon>Jakobida</taxon>
        <taxon>Histionina</taxon>
        <taxon>Histionidae</taxon>
        <taxon>Reclinomonas</taxon>
    </lineage>
</organism>
<geneLocation type="mitochondrion"/>
<reference key="1">
    <citation type="journal article" date="1997" name="Nature">
        <title>An ancestral mitochondrial DNA resembling a eubacterial genome in miniature.</title>
        <authorList>
            <person name="Lang B.F."/>
            <person name="Burger G."/>
            <person name="O'Kelly C.J."/>
            <person name="Cedergren R."/>
            <person name="Golding G.B."/>
            <person name="Lemieux C."/>
            <person name="Sankoff D."/>
            <person name="Turmel M."/>
            <person name="Gray M.W."/>
        </authorList>
    </citation>
    <scope>NUCLEOTIDE SEQUENCE [GENOMIC DNA]</scope>
    <source>
        <strain>ATCC 50394</strain>
    </source>
</reference>
<gene>
    <name type="primary">RPS10</name>
</gene>
<protein>
    <recommendedName>
        <fullName evidence="1">Small ribosomal subunit protein uS10m</fullName>
    </recommendedName>
    <alternativeName>
        <fullName>Ribosomal protein S10, mitochondrial</fullName>
    </alternativeName>
</protein>
<accession>O21246</accession>
<feature type="chain" id="PRO_0000146673" description="Small ribosomal subunit protein uS10m">
    <location>
        <begin position="1"/>
        <end position="116"/>
    </location>
</feature>
<dbReference type="EMBL" id="AF007261">
    <property type="protein sequence ID" value="AAD11873.1"/>
    <property type="molecule type" value="Genomic_DNA"/>
</dbReference>
<dbReference type="PIR" id="S78140">
    <property type="entry name" value="S78140"/>
</dbReference>
<dbReference type="RefSeq" id="NP_044758.1">
    <property type="nucleotide sequence ID" value="NC_001823.1"/>
</dbReference>
<dbReference type="SMR" id="O21246"/>
<dbReference type="GeneID" id="801087"/>
<dbReference type="GO" id="GO:0005739">
    <property type="term" value="C:mitochondrion"/>
    <property type="evidence" value="ECO:0007669"/>
    <property type="project" value="UniProtKB-SubCell"/>
</dbReference>
<dbReference type="GO" id="GO:1990904">
    <property type="term" value="C:ribonucleoprotein complex"/>
    <property type="evidence" value="ECO:0007669"/>
    <property type="project" value="UniProtKB-KW"/>
</dbReference>
<dbReference type="GO" id="GO:0005840">
    <property type="term" value="C:ribosome"/>
    <property type="evidence" value="ECO:0007669"/>
    <property type="project" value="UniProtKB-KW"/>
</dbReference>
<dbReference type="GO" id="GO:0003735">
    <property type="term" value="F:structural constituent of ribosome"/>
    <property type="evidence" value="ECO:0007669"/>
    <property type="project" value="InterPro"/>
</dbReference>
<dbReference type="GO" id="GO:0006412">
    <property type="term" value="P:translation"/>
    <property type="evidence" value="ECO:0007669"/>
    <property type="project" value="InterPro"/>
</dbReference>
<dbReference type="Gene3D" id="3.30.70.600">
    <property type="entry name" value="Ribosomal protein S10 domain"/>
    <property type="match status" value="1"/>
</dbReference>
<dbReference type="HAMAP" id="MF_00508">
    <property type="entry name" value="Ribosomal_uS10"/>
    <property type="match status" value="1"/>
</dbReference>
<dbReference type="InterPro" id="IPR001848">
    <property type="entry name" value="Ribosomal_uS10"/>
</dbReference>
<dbReference type="InterPro" id="IPR027486">
    <property type="entry name" value="Ribosomal_uS10_dom"/>
</dbReference>
<dbReference type="InterPro" id="IPR036838">
    <property type="entry name" value="Ribosomal_uS10_dom_sf"/>
</dbReference>
<dbReference type="NCBIfam" id="TIGR01049">
    <property type="entry name" value="rpsJ_bact"/>
    <property type="match status" value="1"/>
</dbReference>
<dbReference type="PANTHER" id="PTHR11700">
    <property type="entry name" value="30S RIBOSOMAL PROTEIN S10 FAMILY MEMBER"/>
    <property type="match status" value="1"/>
</dbReference>
<dbReference type="Pfam" id="PF00338">
    <property type="entry name" value="Ribosomal_S10"/>
    <property type="match status" value="1"/>
</dbReference>
<dbReference type="PRINTS" id="PR00971">
    <property type="entry name" value="RIBOSOMALS10"/>
</dbReference>
<dbReference type="SMART" id="SM01403">
    <property type="entry name" value="Ribosomal_S10"/>
    <property type="match status" value="1"/>
</dbReference>
<dbReference type="SUPFAM" id="SSF54999">
    <property type="entry name" value="Ribosomal protein S10"/>
    <property type="match status" value="1"/>
</dbReference>
<evidence type="ECO:0000305" key="1"/>